<proteinExistence type="inferred from homology"/>
<sequence>MMARPWNFSAGPSALPEAVLQQAAAEMLDWHGSGMSVMEMSHRGKHFVQICDEAEADLRELLGLPADYAVMFMQGGGLGENAIVPMNLMGRRSTPAADFVVTGHWSTRSHKEAGRYGDAQIAASAAEATEIDGQAQSSWTWLPPVDTWRVRKDSAYLHLCSNETIGGVEFTEWPDPASLGAPDVPLVVDVSSHFLSRPLDIARAGLVFAGAQKNAGPAGVTVVIARRDLLGHALPICPSAFDYANVAADHSRYNTPPTFAIYVMGLVFKWIKAHGGVRGMEEANRAKAELLYGYLDGSAFYRNPVQPAVRSRMNVPFVLRDESLNDAFLQGAEAAGLMQLKGHKSVGGMRASIYNAMPLAGVQALIDYLKEFERRHG</sequence>
<organism>
    <name type="scientific">Bordetella parapertussis (strain 12822 / ATCC BAA-587 / NCTC 13253)</name>
    <dbReference type="NCBI Taxonomy" id="257311"/>
    <lineage>
        <taxon>Bacteria</taxon>
        <taxon>Pseudomonadati</taxon>
        <taxon>Pseudomonadota</taxon>
        <taxon>Betaproteobacteria</taxon>
        <taxon>Burkholderiales</taxon>
        <taxon>Alcaligenaceae</taxon>
        <taxon>Bordetella</taxon>
    </lineage>
</organism>
<protein>
    <recommendedName>
        <fullName evidence="1">Phosphoserine aminotransferase</fullName>
        <ecNumber evidence="1">2.6.1.52</ecNumber>
    </recommendedName>
    <alternativeName>
        <fullName evidence="1">Phosphohydroxythreonine aminotransferase</fullName>
        <shortName evidence="1">PSAT</shortName>
    </alternativeName>
</protein>
<feature type="chain" id="PRO_0000150156" description="Phosphoserine aminotransferase">
    <location>
        <begin position="1"/>
        <end position="377"/>
    </location>
</feature>
<feature type="binding site" evidence="1">
    <location>
        <position position="43"/>
    </location>
    <ligand>
        <name>L-glutamate</name>
        <dbReference type="ChEBI" id="CHEBI:29985"/>
    </ligand>
</feature>
<feature type="binding site" evidence="1">
    <location>
        <position position="105"/>
    </location>
    <ligand>
        <name>pyridoxal 5'-phosphate</name>
        <dbReference type="ChEBI" id="CHEBI:597326"/>
    </ligand>
</feature>
<feature type="binding site" evidence="1">
    <location>
        <position position="164"/>
    </location>
    <ligand>
        <name>pyridoxal 5'-phosphate</name>
        <dbReference type="ChEBI" id="CHEBI:597326"/>
    </ligand>
</feature>
<feature type="binding site" evidence="1">
    <location>
        <position position="189"/>
    </location>
    <ligand>
        <name>pyridoxal 5'-phosphate</name>
        <dbReference type="ChEBI" id="CHEBI:597326"/>
    </ligand>
</feature>
<feature type="binding site" evidence="1">
    <location>
        <position position="212"/>
    </location>
    <ligand>
        <name>pyridoxal 5'-phosphate</name>
        <dbReference type="ChEBI" id="CHEBI:597326"/>
    </ligand>
</feature>
<feature type="binding site" evidence="1">
    <location>
        <begin position="254"/>
        <end position="255"/>
    </location>
    <ligand>
        <name>pyridoxal 5'-phosphate</name>
        <dbReference type="ChEBI" id="CHEBI:597326"/>
    </ligand>
</feature>
<feature type="modified residue" description="N6-(pyridoxal phosphate)lysine" evidence="1">
    <location>
        <position position="213"/>
    </location>
</feature>
<dbReference type="EC" id="2.6.1.52" evidence="1"/>
<dbReference type="EMBL" id="BX640432">
    <property type="protein sequence ID" value="CAE38418.1"/>
    <property type="molecule type" value="Genomic_DNA"/>
</dbReference>
<dbReference type="RefSeq" id="WP_003813372.1">
    <property type="nucleotide sequence ID" value="NC_002928.3"/>
</dbReference>
<dbReference type="SMR" id="Q7W5Z9"/>
<dbReference type="GeneID" id="93204914"/>
<dbReference type="KEGG" id="bpa:BPP3133"/>
<dbReference type="HOGENOM" id="CLU_034866_0_2_4"/>
<dbReference type="UniPathway" id="UPA00135">
    <property type="reaction ID" value="UER00197"/>
</dbReference>
<dbReference type="UniPathway" id="UPA00244">
    <property type="reaction ID" value="UER00311"/>
</dbReference>
<dbReference type="Proteomes" id="UP000001421">
    <property type="component" value="Chromosome"/>
</dbReference>
<dbReference type="GO" id="GO:0005737">
    <property type="term" value="C:cytoplasm"/>
    <property type="evidence" value="ECO:0007669"/>
    <property type="project" value="UniProtKB-SubCell"/>
</dbReference>
<dbReference type="GO" id="GO:0004648">
    <property type="term" value="F:O-phospho-L-serine:2-oxoglutarate aminotransferase activity"/>
    <property type="evidence" value="ECO:0007669"/>
    <property type="project" value="UniProtKB-UniRule"/>
</dbReference>
<dbReference type="GO" id="GO:0030170">
    <property type="term" value="F:pyridoxal phosphate binding"/>
    <property type="evidence" value="ECO:0007669"/>
    <property type="project" value="UniProtKB-UniRule"/>
</dbReference>
<dbReference type="GO" id="GO:0006564">
    <property type="term" value="P:L-serine biosynthetic process"/>
    <property type="evidence" value="ECO:0007669"/>
    <property type="project" value="UniProtKB-UniRule"/>
</dbReference>
<dbReference type="GO" id="GO:0008615">
    <property type="term" value="P:pyridoxine biosynthetic process"/>
    <property type="evidence" value="ECO:0007669"/>
    <property type="project" value="UniProtKB-UniRule"/>
</dbReference>
<dbReference type="FunFam" id="3.40.640.10:FF:000010">
    <property type="entry name" value="Phosphoserine aminotransferase"/>
    <property type="match status" value="1"/>
</dbReference>
<dbReference type="FunFam" id="3.90.1150.10:FF:000006">
    <property type="entry name" value="Phosphoserine aminotransferase"/>
    <property type="match status" value="1"/>
</dbReference>
<dbReference type="Gene3D" id="3.90.1150.10">
    <property type="entry name" value="Aspartate Aminotransferase, domain 1"/>
    <property type="match status" value="1"/>
</dbReference>
<dbReference type="Gene3D" id="3.40.640.10">
    <property type="entry name" value="Type I PLP-dependent aspartate aminotransferase-like (Major domain)"/>
    <property type="match status" value="1"/>
</dbReference>
<dbReference type="HAMAP" id="MF_00160">
    <property type="entry name" value="SerC_aminotrans_5"/>
    <property type="match status" value="1"/>
</dbReference>
<dbReference type="InterPro" id="IPR000192">
    <property type="entry name" value="Aminotrans_V_dom"/>
</dbReference>
<dbReference type="InterPro" id="IPR022278">
    <property type="entry name" value="Pser_aminoTfrase"/>
</dbReference>
<dbReference type="InterPro" id="IPR015424">
    <property type="entry name" value="PyrdxlP-dep_Trfase"/>
</dbReference>
<dbReference type="InterPro" id="IPR015421">
    <property type="entry name" value="PyrdxlP-dep_Trfase_major"/>
</dbReference>
<dbReference type="InterPro" id="IPR015422">
    <property type="entry name" value="PyrdxlP-dep_Trfase_small"/>
</dbReference>
<dbReference type="NCBIfam" id="NF003764">
    <property type="entry name" value="PRK05355.1"/>
    <property type="match status" value="1"/>
</dbReference>
<dbReference type="NCBIfam" id="TIGR01364">
    <property type="entry name" value="serC_1"/>
    <property type="match status" value="1"/>
</dbReference>
<dbReference type="PANTHER" id="PTHR43247">
    <property type="entry name" value="PHOSPHOSERINE AMINOTRANSFERASE"/>
    <property type="match status" value="1"/>
</dbReference>
<dbReference type="PANTHER" id="PTHR43247:SF1">
    <property type="entry name" value="PHOSPHOSERINE AMINOTRANSFERASE"/>
    <property type="match status" value="1"/>
</dbReference>
<dbReference type="Pfam" id="PF00266">
    <property type="entry name" value="Aminotran_5"/>
    <property type="match status" value="1"/>
</dbReference>
<dbReference type="PIRSF" id="PIRSF000525">
    <property type="entry name" value="SerC"/>
    <property type="match status" value="1"/>
</dbReference>
<dbReference type="SUPFAM" id="SSF53383">
    <property type="entry name" value="PLP-dependent transferases"/>
    <property type="match status" value="1"/>
</dbReference>
<accession>Q7W5Z9</accession>
<comment type="function">
    <text evidence="1">Catalyzes the reversible conversion of 3-phosphohydroxypyruvate to phosphoserine and of 3-hydroxy-2-oxo-4-phosphonooxybutanoate to phosphohydroxythreonine.</text>
</comment>
<comment type="catalytic activity">
    <reaction evidence="1">
        <text>O-phospho-L-serine + 2-oxoglutarate = 3-phosphooxypyruvate + L-glutamate</text>
        <dbReference type="Rhea" id="RHEA:14329"/>
        <dbReference type="ChEBI" id="CHEBI:16810"/>
        <dbReference type="ChEBI" id="CHEBI:18110"/>
        <dbReference type="ChEBI" id="CHEBI:29985"/>
        <dbReference type="ChEBI" id="CHEBI:57524"/>
        <dbReference type="EC" id="2.6.1.52"/>
    </reaction>
</comment>
<comment type="catalytic activity">
    <reaction evidence="1">
        <text>4-(phosphooxy)-L-threonine + 2-oxoglutarate = (R)-3-hydroxy-2-oxo-4-phosphooxybutanoate + L-glutamate</text>
        <dbReference type="Rhea" id="RHEA:16573"/>
        <dbReference type="ChEBI" id="CHEBI:16810"/>
        <dbReference type="ChEBI" id="CHEBI:29985"/>
        <dbReference type="ChEBI" id="CHEBI:58452"/>
        <dbReference type="ChEBI" id="CHEBI:58538"/>
        <dbReference type="EC" id="2.6.1.52"/>
    </reaction>
</comment>
<comment type="cofactor">
    <cofactor evidence="1">
        <name>pyridoxal 5'-phosphate</name>
        <dbReference type="ChEBI" id="CHEBI:597326"/>
    </cofactor>
    <text evidence="1">Binds 1 pyridoxal phosphate per subunit.</text>
</comment>
<comment type="pathway">
    <text evidence="1">Amino-acid biosynthesis; L-serine biosynthesis; L-serine from 3-phospho-D-glycerate: step 2/3.</text>
</comment>
<comment type="pathway">
    <text evidence="1">Cofactor biosynthesis; pyridoxine 5'-phosphate biosynthesis; pyridoxine 5'-phosphate from D-erythrose 4-phosphate: step 3/5.</text>
</comment>
<comment type="subunit">
    <text evidence="1">Homodimer.</text>
</comment>
<comment type="subcellular location">
    <subcellularLocation>
        <location evidence="1">Cytoplasm</location>
    </subcellularLocation>
</comment>
<comment type="similarity">
    <text evidence="1">Belongs to the class-V pyridoxal-phosphate-dependent aminotransferase family. SerC subfamily.</text>
</comment>
<gene>
    <name evidence="1" type="primary">serC</name>
    <name type="ordered locus">BPP3133</name>
</gene>
<reference key="1">
    <citation type="journal article" date="2003" name="Nat. Genet.">
        <title>Comparative analysis of the genome sequences of Bordetella pertussis, Bordetella parapertussis and Bordetella bronchiseptica.</title>
        <authorList>
            <person name="Parkhill J."/>
            <person name="Sebaihia M."/>
            <person name="Preston A."/>
            <person name="Murphy L.D."/>
            <person name="Thomson N.R."/>
            <person name="Harris D.E."/>
            <person name="Holden M.T.G."/>
            <person name="Churcher C.M."/>
            <person name="Bentley S.D."/>
            <person name="Mungall K.L."/>
            <person name="Cerdeno-Tarraga A.-M."/>
            <person name="Temple L."/>
            <person name="James K.D."/>
            <person name="Harris B."/>
            <person name="Quail M.A."/>
            <person name="Achtman M."/>
            <person name="Atkin R."/>
            <person name="Baker S."/>
            <person name="Basham D."/>
            <person name="Bason N."/>
            <person name="Cherevach I."/>
            <person name="Chillingworth T."/>
            <person name="Collins M."/>
            <person name="Cronin A."/>
            <person name="Davis P."/>
            <person name="Doggett J."/>
            <person name="Feltwell T."/>
            <person name="Goble A."/>
            <person name="Hamlin N."/>
            <person name="Hauser H."/>
            <person name="Holroyd S."/>
            <person name="Jagels K."/>
            <person name="Leather S."/>
            <person name="Moule S."/>
            <person name="Norberczak H."/>
            <person name="O'Neil S."/>
            <person name="Ormond D."/>
            <person name="Price C."/>
            <person name="Rabbinowitsch E."/>
            <person name="Rutter S."/>
            <person name="Sanders M."/>
            <person name="Saunders D."/>
            <person name="Seeger K."/>
            <person name="Sharp S."/>
            <person name="Simmonds M."/>
            <person name="Skelton J."/>
            <person name="Squares R."/>
            <person name="Squares S."/>
            <person name="Stevens K."/>
            <person name="Unwin L."/>
            <person name="Whitehead S."/>
            <person name="Barrell B.G."/>
            <person name="Maskell D.J."/>
        </authorList>
    </citation>
    <scope>NUCLEOTIDE SEQUENCE [LARGE SCALE GENOMIC DNA]</scope>
    <source>
        <strain>12822 / ATCC BAA-587 / NCTC 13253</strain>
    </source>
</reference>
<keyword id="KW-0028">Amino-acid biosynthesis</keyword>
<keyword id="KW-0032">Aminotransferase</keyword>
<keyword id="KW-0963">Cytoplasm</keyword>
<keyword id="KW-0663">Pyridoxal phosphate</keyword>
<keyword id="KW-0664">Pyridoxine biosynthesis</keyword>
<keyword id="KW-0718">Serine biosynthesis</keyword>
<keyword id="KW-0808">Transferase</keyword>
<evidence type="ECO:0000255" key="1">
    <source>
        <dbReference type="HAMAP-Rule" id="MF_00160"/>
    </source>
</evidence>
<name>SERC_BORPA</name>